<accession>B0STV8</accession>
<proteinExistence type="inferred from homology"/>
<organism>
    <name type="scientific">Leptospira biflexa serovar Patoc (strain Patoc 1 / ATCC 23582 / Paris)</name>
    <dbReference type="NCBI Taxonomy" id="456481"/>
    <lineage>
        <taxon>Bacteria</taxon>
        <taxon>Pseudomonadati</taxon>
        <taxon>Spirochaetota</taxon>
        <taxon>Spirochaetia</taxon>
        <taxon>Leptospirales</taxon>
        <taxon>Leptospiraceae</taxon>
        <taxon>Leptospira</taxon>
    </lineage>
</organism>
<evidence type="ECO:0000255" key="1">
    <source>
        <dbReference type="HAMAP-Rule" id="MF_00198"/>
    </source>
</evidence>
<name>SPEE_LEPBP</name>
<feature type="chain" id="PRO_1000099292" description="Polyamine aminopropyltransferase">
    <location>
        <begin position="1"/>
        <end position="281"/>
    </location>
</feature>
<feature type="domain" description="PABS" evidence="1">
    <location>
        <begin position="2"/>
        <end position="237"/>
    </location>
</feature>
<feature type="active site" description="Proton acceptor" evidence="1">
    <location>
        <position position="157"/>
    </location>
</feature>
<feature type="binding site" evidence="1">
    <location>
        <position position="33"/>
    </location>
    <ligand>
        <name>S-methyl-5'-thioadenosine</name>
        <dbReference type="ChEBI" id="CHEBI:17509"/>
    </ligand>
</feature>
<feature type="binding site" evidence="1">
    <location>
        <position position="64"/>
    </location>
    <ligand>
        <name>spermidine</name>
        <dbReference type="ChEBI" id="CHEBI:57834"/>
    </ligand>
</feature>
<feature type="binding site" evidence="1">
    <location>
        <position position="88"/>
    </location>
    <ligand>
        <name>spermidine</name>
        <dbReference type="ChEBI" id="CHEBI:57834"/>
    </ligand>
</feature>
<feature type="binding site" evidence="1">
    <location>
        <position position="108"/>
    </location>
    <ligand>
        <name>S-methyl-5'-thioadenosine</name>
        <dbReference type="ChEBI" id="CHEBI:17509"/>
    </ligand>
</feature>
<feature type="binding site" evidence="1">
    <location>
        <begin position="139"/>
        <end position="140"/>
    </location>
    <ligand>
        <name>S-methyl-5'-thioadenosine</name>
        <dbReference type="ChEBI" id="CHEBI:17509"/>
    </ligand>
</feature>
<feature type="binding site" evidence="1">
    <location>
        <begin position="157"/>
        <end position="160"/>
    </location>
    <ligand>
        <name>spermidine</name>
        <dbReference type="ChEBI" id="CHEBI:57834"/>
    </ligand>
</feature>
<feature type="binding site" evidence="1">
    <location>
        <position position="164"/>
    </location>
    <ligand>
        <name>S-methyl-5'-thioadenosine</name>
        <dbReference type="ChEBI" id="CHEBI:17509"/>
    </ligand>
</feature>
<gene>
    <name evidence="1" type="primary">speE</name>
    <name type="ordered locus">LEPBI_II0106</name>
</gene>
<comment type="function">
    <text evidence="1">Catalyzes the irreversible transfer of a propylamine group from the amino donor S-adenosylmethioninamine (decarboxy-AdoMet) to putrescine (1,4-diaminobutane) to yield spermidine.</text>
</comment>
<comment type="catalytic activity">
    <reaction evidence="1">
        <text>S-adenosyl 3-(methylsulfanyl)propylamine + putrescine = S-methyl-5'-thioadenosine + spermidine + H(+)</text>
        <dbReference type="Rhea" id="RHEA:12721"/>
        <dbReference type="ChEBI" id="CHEBI:15378"/>
        <dbReference type="ChEBI" id="CHEBI:17509"/>
        <dbReference type="ChEBI" id="CHEBI:57443"/>
        <dbReference type="ChEBI" id="CHEBI:57834"/>
        <dbReference type="ChEBI" id="CHEBI:326268"/>
        <dbReference type="EC" id="2.5.1.16"/>
    </reaction>
</comment>
<comment type="pathway">
    <text evidence="1">Amine and polyamine biosynthesis; spermidine biosynthesis; spermidine from putrescine: step 1/1.</text>
</comment>
<comment type="subunit">
    <text evidence="1">Homodimer or homotetramer.</text>
</comment>
<comment type="subcellular location">
    <subcellularLocation>
        <location evidence="1">Cytoplasm</location>
    </subcellularLocation>
</comment>
<comment type="similarity">
    <text evidence="1">Belongs to the spermidine/spermine synthase family.</text>
</comment>
<keyword id="KW-0963">Cytoplasm</keyword>
<keyword id="KW-0620">Polyamine biosynthesis</keyword>
<keyword id="KW-1185">Reference proteome</keyword>
<keyword id="KW-0745">Spermidine biosynthesis</keyword>
<keyword id="KW-0808">Transferase</keyword>
<sequence>MEIWYTEKLELEKGRAVSYRVTKTIESLQSPFQKIDIFETQSFGRMFTLDGVTMVTNKDEHSYHEMIAHIPMMSHPNPESVLVIGGGDGGTVREVLKHPSVKEVVLCEIDKAVVDISYKYFPECADAMKDPKVIHHYDDGAKFARDNKGRFDVILVDSSDPVGPAEVLFKEPFFRDMASALKPTGIIATQAESFWYHGDVITSLFEFIPKIFPEYGYYYTTIPTYPSGIIGFTFLSNAIDPYAVTPDPKRVPKGLKYYSPEIHKAAFVLPEFAKAYIKRKG</sequence>
<protein>
    <recommendedName>
        <fullName evidence="1">Polyamine aminopropyltransferase</fullName>
    </recommendedName>
    <alternativeName>
        <fullName evidence="1">Putrescine aminopropyltransferase</fullName>
        <shortName evidence="1">PAPT</shortName>
    </alternativeName>
    <alternativeName>
        <fullName evidence="1">Spermidine synthase</fullName>
        <shortName evidence="1">SPDS</shortName>
        <shortName evidence="1">SPDSY</shortName>
        <ecNumber evidence="1">2.5.1.16</ecNumber>
    </alternativeName>
</protein>
<reference key="1">
    <citation type="journal article" date="2008" name="PLoS ONE">
        <title>Genome sequence of the saprophyte Leptospira biflexa provides insights into the evolution of Leptospira and the pathogenesis of leptospirosis.</title>
        <authorList>
            <person name="Picardeau M."/>
            <person name="Bulach D.M."/>
            <person name="Bouchier C."/>
            <person name="Zuerner R.L."/>
            <person name="Zidane N."/>
            <person name="Wilson P.J."/>
            <person name="Creno S."/>
            <person name="Kuczek E.S."/>
            <person name="Bommezzadri S."/>
            <person name="Davis J.C."/>
            <person name="McGrath A."/>
            <person name="Johnson M.J."/>
            <person name="Boursaux-Eude C."/>
            <person name="Seemann T."/>
            <person name="Rouy Z."/>
            <person name="Coppel R.L."/>
            <person name="Rood J.I."/>
            <person name="Lajus A."/>
            <person name="Davies J.K."/>
            <person name="Medigue C."/>
            <person name="Adler B."/>
        </authorList>
    </citation>
    <scope>NUCLEOTIDE SEQUENCE [LARGE SCALE GENOMIC DNA]</scope>
    <source>
        <strain>Patoc 1 / ATCC 23582 / Paris</strain>
    </source>
</reference>
<dbReference type="EC" id="2.5.1.16" evidence="1"/>
<dbReference type="EMBL" id="CP000787">
    <property type="protein sequence ID" value="ABZ99642.1"/>
    <property type="molecule type" value="Genomic_DNA"/>
</dbReference>
<dbReference type="RefSeq" id="WP_012476580.1">
    <property type="nucleotide sequence ID" value="NC_010843.1"/>
</dbReference>
<dbReference type="SMR" id="B0STV8"/>
<dbReference type="STRING" id="456481.LEPBI_II0106"/>
<dbReference type="KEGG" id="lbi:LEPBI_II0106"/>
<dbReference type="HOGENOM" id="CLU_048199_1_0_12"/>
<dbReference type="OrthoDB" id="9793120at2"/>
<dbReference type="BioCyc" id="LBIF456481:LEPBI_RS17600-MONOMER"/>
<dbReference type="UniPathway" id="UPA00248">
    <property type="reaction ID" value="UER00314"/>
</dbReference>
<dbReference type="Proteomes" id="UP000001847">
    <property type="component" value="Chromosome II"/>
</dbReference>
<dbReference type="GO" id="GO:0005829">
    <property type="term" value="C:cytosol"/>
    <property type="evidence" value="ECO:0007669"/>
    <property type="project" value="TreeGrafter"/>
</dbReference>
<dbReference type="GO" id="GO:0004766">
    <property type="term" value="F:spermidine synthase activity"/>
    <property type="evidence" value="ECO:0007669"/>
    <property type="project" value="UniProtKB-UniRule"/>
</dbReference>
<dbReference type="GO" id="GO:0008295">
    <property type="term" value="P:spermidine biosynthetic process"/>
    <property type="evidence" value="ECO:0007669"/>
    <property type="project" value="UniProtKB-UniRule"/>
</dbReference>
<dbReference type="CDD" id="cd02440">
    <property type="entry name" value="AdoMet_MTases"/>
    <property type="match status" value="1"/>
</dbReference>
<dbReference type="FunFam" id="3.40.50.150:FF:000013">
    <property type="entry name" value="Spermidine synthase"/>
    <property type="match status" value="1"/>
</dbReference>
<dbReference type="Gene3D" id="2.30.140.10">
    <property type="entry name" value="Spermidine synthase, tetramerisation domain"/>
    <property type="match status" value="1"/>
</dbReference>
<dbReference type="Gene3D" id="3.40.50.150">
    <property type="entry name" value="Vaccinia Virus protein VP39"/>
    <property type="match status" value="1"/>
</dbReference>
<dbReference type="HAMAP" id="MF_00198">
    <property type="entry name" value="Spermidine_synth"/>
    <property type="match status" value="1"/>
</dbReference>
<dbReference type="InterPro" id="IPR030374">
    <property type="entry name" value="PABS"/>
</dbReference>
<dbReference type="InterPro" id="IPR030373">
    <property type="entry name" value="PABS_CS"/>
</dbReference>
<dbReference type="InterPro" id="IPR029063">
    <property type="entry name" value="SAM-dependent_MTases_sf"/>
</dbReference>
<dbReference type="InterPro" id="IPR001045">
    <property type="entry name" value="Spermi_synthase"/>
</dbReference>
<dbReference type="InterPro" id="IPR035246">
    <property type="entry name" value="Spermidine_synt_N"/>
</dbReference>
<dbReference type="InterPro" id="IPR037163">
    <property type="entry name" value="Spermidine_synt_N_sf"/>
</dbReference>
<dbReference type="NCBIfam" id="NF002010">
    <property type="entry name" value="PRK00811.1"/>
    <property type="match status" value="1"/>
</dbReference>
<dbReference type="NCBIfam" id="TIGR00417">
    <property type="entry name" value="speE"/>
    <property type="match status" value="1"/>
</dbReference>
<dbReference type="PANTHER" id="PTHR11558:SF11">
    <property type="entry name" value="SPERMIDINE SYNTHASE"/>
    <property type="match status" value="1"/>
</dbReference>
<dbReference type="PANTHER" id="PTHR11558">
    <property type="entry name" value="SPERMIDINE/SPERMINE SYNTHASE"/>
    <property type="match status" value="1"/>
</dbReference>
<dbReference type="Pfam" id="PF17284">
    <property type="entry name" value="Spermine_synt_N"/>
    <property type="match status" value="1"/>
</dbReference>
<dbReference type="Pfam" id="PF01564">
    <property type="entry name" value="Spermine_synth"/>
    <property type="match status" value="1"/>
</dbReference>
<dbReference type="SUPFAM" id="SSF53335">
    <property type="entry name" value="S-adenosyl-L-methionine-dependent methyltransferases"/>
    <property type="match status" value="1"/>
</dbReference>
<dbReference type="PROSITE" id="PS01330">
    <property type="entry name" value="PABS_1"/>
    <property type="match status" value="1"/>
</dbReference>
<dbReference type="PROSITE" id="PS51006">
    <property type="entry name" value="PABS_2"/>
    <property type="match status" value="1"/>
</dbReference>